<protein>
    <recommendedName>
        <fullName evidence="2">HTH-type transcriptional regulator BetI</fullName>
    </recommendedName>
</protein>
<sequence>MPKLGMQSIRRRQLIDATLEAINEVGMHDATIAQIARRAGVSTGIISHYFRDKNGLLEATMRDITSQLRDAVLNRLHALPQGSAEQRLQAIVDGNFDETQVSNAAMKAWLAFWASSMHQPMLYRLQQVSSRRLLSNLVSEFHRELPRQQAQEAGYGLAALIDGLWLRAALSGKPLDKPLAHSLTRHFITQHLPTD</sequence>
<organism>
    <name type="scientific">Escherichia coli O17:K52:H18 (strain UMN026 / ExPEC)</name>
    <dbReference type="NCBI Taxonomy" id="585056"/>
    <lineage>
        <taxon>Bacteria</taxon>
        <taxon>Pseudomonadati</taxon>
        <taxon>Pseudomonadota</taxon>
        <taxon>Gammaproteobacteria</taxon>
        <taxon>Enterobacterales</taxon>
        <taxon>Enterobacteriaceae</taxon>
        <taxon>Escherichia</taxon>
    </lineage>
</organism>
<keyword id="KW-0238">DNA-binding</keyword>
<keyword id="KW-0678">Repressor</keyword>
<keyword id="KW-0804">Transcription</keyword>
<keyword id="KW-0805">Transcription regulation</keyword>
<accession>B7N8L5</accession>
<dbReference type="EMBL" id="CU928163">
    <property type="protein sequence ID" value="CAR11566.1"/>
    <property type="molecule type" value="Genomic_DNA"/>
</dbReference>
<dbReference type="RefSeq" id="WP_001376735.1">
    <property type="nucleotide sequence ID" value="NC_011751.1"/>
</dbReference>
<dbReference type="RefSeq" id="YP_002411116.1">
    <property type="nucleotide sequence ID" value="NC_011751.1"/>
</dbReference>
<dbReference type="SMR" id="B7N8L5"/>
<dbReference type="STRING" id="585056.ECUMN_0351"/>
<dbReference type="KEGG" id="eum:ECUMN_0351"/>
<dbReference type="PATRIC" id="fig|585056.7.peg.550"/>
<dbReference type="HOGENOM" id="CLU_069356_15_4_6"/>
<dbReference type="UniPathway" id="UPA00529"/>
<dbReference type="Proteomes" id="UP000007097">
    <property type="component" value="Chromosome"/>
</dbReference>
<dbReference type="GO" id="GO:0003700">
    <property type="term" value="F:DNA-binding transcription factor activity"/>
    <property type="evidence" value="ECO:0007669"/>
    <property type="project" value="UniProtKB-UniRule"/>
</dbReference>
<dbReference type="GO" id="GO:0000976">
    <property type="term" value="F:transcription cis-regulatory region binding"/>
    <property type="evidence" value="ECO:0007669"/>
    <property type="project" value="TreeGrafter"/>
</dbReference>
<dbReference type="GO" id="GO:0019285">
    <property type="term" value="P:glycine betaine biosynthetic process from choline"/>
    <property type="evidence" value="ECO:0007669"/>
    <property type="project" value="UniProtKB-UniRule"/>
</dbReference>
<dbReference type="GO" id="GO:0045892">
    <property type="term" value="P:negative regulation of DNA-templated transcription"/>
    <property type="evidence" value="ECO:0007669"/>
    <property type="project" value="UniProtKB-UniRule"/>
</dbReference>
<dbReference type="FunFam" id="1.10.357.10:FF:000009">
    <property type="entry name" value="HTH-type transcriptional regulator BetI"/>
    <property type="match status" value="1"/>
</dbReference>
<dbReference type="Gene3D" id="1.10.357.10">
    <property type="entry name" value="Tetracycline Repressor, domain 2"/>
    <property type="match status" value="1"/>
</dbReference>
<dbReference type="HAMAP" id="MF_00768">
    <property type="entry name" value="HTH_type_BetI"/>
    <property type="match status" value="1"/>
</dbReference>
<dbReference type="InterPro" id="IPR039538">
    <property type="entry name" value="BetI_C"/>
</dbReference>
<dbReference type="InterPro" id="IPR023772">
    <property type="entry name" value="DNA-bd_HTH_TetR-type_CS"/>
</dbReference>
<dbReference type="InterPro" id="IPR009057">
    <property type="entry name" value="Homeodomain-like_sf"/>
</dbReference>
<dbReference type="InterPro" id="IPR050109">
    <property type="entry name" value="HTH-type_TetR-like_transc_reg"/>
</dbReference>
<dbReference type="InterPro" id="IPR001647">
    <property type="entry name" value="HTH_TetR"/>
</dbReference>
<dbReference type="InterPro" id="IPR036271">
    <property type="entry name" value="Tet_transcr_reg_TetR-rel_C_sf"/>
</dbReference>
<dbReference type="InterPro" id="IPR017757">
    <property type="entry name" value="Tscrpt_rep_BetI"/>
</dbReference>
<dbReference type="NCBIfam" id="TIGR03384">
    <property type="entry name" value="betaine_BetI"/>
    <property type="match status" value="1"/>
</dbReference>
<dbReference type="NCBIfam" id="NF001978">
    <property type="entry name" value="PRK00767.1"/>
    <property type="match status" value="1"/>
</dbReference>
<dbReference type="PANTHER" id="PTHR30055:SF234">
    <property type="entry name" value="HTH-TYPE TRANSCRIPTIONAL REGULATOR BETI"/>
    <property type="match status" value="1"/>
</dbReference>
<dbReference type="PANTHER" id="PTHR30055">
    <property type="entry name" value="HTH-TYPE TRANSCRIPTIONAL REGULATOR RUTR"/>
    <property type="match status" value="1"/>
</dbReference>
<dbReference type="Pfam" id="PF13977">
    <property type="entry name" value="TetR_C_6"/>
    <property type="match status" value="1"/>
</dbReference>
<dbReference type="Pfam" id="PF00440">
    <property type="entry name" value="TetR_N"/>
    <property type="match status" value="1"/>
</dbReference>
<dbReference type="PRINTS" id="PR00455">
    <property type="entry name" value="HTHTETR"/>
</dbReference>
<dbReference type="SUPFAM" id="SSF46689">
    <property type="entry name" value="Homeodomain-like"/>
    <property type="match status" value="1"/>
</dbReference>
<dbReference type="SUPFAM" id="SSF48498">
    <property type="entry name" value="Tetracyclin repressor-like, C-terminal domain"/>
    <property type="match status" value="1"/>
</dbReference>
<dbReference type="PROSITE" id="PS01081">
    <property type="entry name" value="HTH_TETR_1"/>
    <property type="match status" value="1"/>
</dbReference>
<dbReference type="PROSITE" id="PS50977">
    <property type="entry name" value="HTH_TETR_2"/>
    <property type="match status" value="1"/>
</dbReference>
<feature type="chain" id="PRO_1000190485" description="HTH-type transcriptional regulator BetI">
    <location>
        <begin position="1"/>
        <end position="195"/>
    </location>
</feature>
<feature type="domain" description="HTH tetR-type" evidence="2">
    <location>
        <begin position="8"/>
        <end position="68"/>
    </location>
</feature>
<feature type="DNA-binding region" description="H-T-H motif" evidence="2">
    <location>
        <begin position="31"/>
        <end position="50"/>
    </location>
</feature>
<comment type="function">
    <text evidence="1">Repressor involved in the biosynthesis of the osmoprotectant glycine betaine. It represses transcription of the choline transporter BetT and the genes of BetAB involved in the synthesis of glycine betaine (By similarity).</text>
</comment>
<comment type="pathway">
    <text>Amine and polyamine biosynthesis; betaine biosynthesis via choline pathway [regulation].</text>
</comment>
<reference key="1">
    <citation type="journal article" date="2009" name="PLoS Genet.">
        <title>Organised genome dynamics in the Escherichia coli species results in highly diverse adaptive paths.</title>
        <authorList>
            <person name="Touchon M."/>
            <person name="Hoede C."/>
            <person name="Tenaillon O."/>
            <person name="Barbe V."/>
            <person name="Baeriswyl S."/>
            <person name="Bidet P."/>
            <person name="Bingen E."/>
            <person name="Bonacorsi S."/>
            <person name="Bouchier C."/>
            <person name="Bouvet O."/>
            <person name="Calteau A."/>
            <person name="Chiapello H."/>
            <person name="Clermont O."/>
            <person name="Cruveiller S."/>
            <person name="Danchin A."/>
            <person name="Diard M."/>
            <person name="Dossat C."/>
            <person name="Karoui M.E."/>
            <person name="Frapy E."/>
            <person name="Garry L."/>
            <person name="Ghigo J.M."/>
            <person name="Gilles A.M."/>
            <person name="Johnson J."/>
            <person name="Le Bouguenec C."/>
            <person name="Lescat M."/>
            <person name="Mangenot S."/>
            <person name="Martinez-Jehanne V."/>
            <person name="Matic I."/>
            <person name="Nassif X."/>
            <person name="Oztas S."/>
            <person name="Petit M.A."/>
            <person name="Pichon C."/>
            <person name="Rouy Z."/>
            <person name="Ruf C.S."/>
            <person name="Schneider D."/>
            <person name="Tourret J."/>
            <person name="Vacherie B."/>
            <person name="Vallenet D."/>
            <person name="Medigue C."/>
            <person name="Rocha E.P.C."/>
            <person name="Denamur E."/>
        </authorList>
    </citation>
    <scope>NUCLEOTIDE SEQUENCE [LARGE SCALE GENOMIC DNA]</scope>
    <source>
        <strain>UMN026 / ExPEC</strain>
    </source>
</reference>
<proteinExistence type="inferred from homology"/>
<gene>
    <name evidence="2" type="primary">betI</name>
    <name type="ordered locus">ECUMN_0351</name>
</gene>
<name>BETI_ECOLU</name>
<evidence type="ECO:0000250" key="1"/>
<evidence type="ECO:0000255" key="2">
    <source>
        <dbReference type="HAMAP-Rule" id="MF_00768"/>
    </source>
</evidence>